<dbReference type="SMR" id="P86756"/>
<dbReference type="Allergome" id="7645">
    <property type="allergen name" value="Mer ca 1"/>
</dbReference>
<dbReference type="iPTMnet" id="P86756"/>
<dbReference type="GO" id="GO:0005737">
    <property type="term" value="C:cytoplasm"/>
    <property type="evidence" value="ECO:0007669"/>
    <property type="project" value="TreeGrafter"/>
</dbReference>
<dbReference type="GO" id="GO:0005509">
    <property type="term" value="F:calcium ion binding"/>
    <property type="evidence" value="ECO:0007669"/>
    <property type="project" value="InterPro"/>
</dbReference>
<dbReference type="CDD" id="cd16255">
    <property type="entry name" value="EFh_parvalbumin_beta"/>
    <property type="match status" value="1"/>
</dbReference>
<dbReference type="FunFam" id="1.10.238.10:FF:000060">
    <property type="entry name" value="Parvalbumin, thymic"/>
    <property type="match status" value="1"/>
</dbReference>
<dbReference type="Gene3D" id="1.10.238.10">
    <property type="entry name" value="EF-hand"/>
    <property type="match status" value="1"/>
</dbReference>
<dbReference type="InterPro" id="IPR011992">
    <property type="entry name" value="EF-hand-dom_pair"/>
</dbReference>
<dbReference type="InterPro" id="IPR018247">
    <property type="entry name" value="EF_Hand_1_Ca_BS"/>
</dbReference>
<dbReference type="InterPro" id="IPR002048">
    <property type="entry name" value="EF_hand_dom"/>
</dbReference>
<dbReference type="InterPro" id="IPR008080">
    <property type="entry name" value="Parvalbumin"/>
</dbReference>
<dbReference type="PANTHER" id="PTHR11653:SF12">
    <property type="entry name" value="PARVALBUMIN"/>
    <property type="match status" value="1"/>
</dbReference>
<dbReference type="PANTHER" id="PTHR11653">
    <property type="entry name" value="PARVALBUMIN ALPHA"/>
    <property type="match status" value="1"/>
</dbReference>
<dbReference type="Pfam" id="PF13499">
    <property type="entry name" value="EF-hand_7"/>
    <property type="match status" value="1"/>
</dbReference>
<dbReference type="PRINTS" id="PR01697">
    <property type="entry name" value="PARVALBUMIN"/>
</dbReference>
<dbReference type="SUPFAM" id="SSF47473">
    <property type="entry name" value="EF-hand"/>
    <property type="match status" value="1"/>
</dbReference>
<dbReference type="PROSITE" id="PS00018">
    <property type="entry name" value="EF_HAND_1"/>
    <property type="match status" value="2"/>
</dbReference>
<dbReference type="PROSITE" id="PS50222">
    <property type="entry name" value="EF_HAND_2"/>
    <property type="match status" value="2"/>
</dbReference>
<sequence>AFAGILADADITAALAACKAEGSFKHGEFFTKIGLKGKSAADIKKVFGIIDQDKSDFVEEDELKLFLQNFSAGARALTDAETATFLKAGDSDGDGKIGVEEFAAMVKG</sequence>
<feature type="chain" id="PRO_0000399415" description="Parvalbumin beta 1">
    <location>
        <begin position="1"/>
        <end position="108"/>
    </location>
</feature>
<feature type="domain" description="EF-hand 1" evidence="5">
    <location>
        <begin position="38"/>
        <end position="73"/>
    </location>
</feature>
<feature type="domain" description="EF-hand 2" evidence="5">
    <location>
        <begin position="77"/>
        <end position="108"/>
    </location>
</feature>
<feature type="binding site" evidence="1 5">
    <location>
        <position position="51"/>
    </location>
    <ligand>
        <name>Ca(2+)</name>
        <dbReference type="ChEBI" id="CHEBI:29108"/>
        <label>1</label>
    </ligand>
</feature>
<feature type="binding site" evidence="1 5">
    <location>
        <position position="53"/>
    </location>
    <ligand>
        <name>Ca(2+)</name>
        <dbReference type="ChEBI" id="CHEBI:29108"/>
        <label>1</label>
    </ligand>
</feature>
<feature type="binding site" evidence="1 5">
    <location>
        <position position="55"/>
    </location>
    <ligand>
        <name>Ca(2+)</name>
        <dbReference type="ChEBI" id="CHEBI:29108"/>
        <label>1</label>
    </ligand>
</feature>
<feature type="binding site" evidence="1">
    <location>
        <position position="57"/>
    </location>
    <ligand>
        <name>Ca(2+)</name>
        <dbReference type="ChEBI" id="CHEBI:29108"/>
        <label>1</label>
    </ligand>
</feature>
<feature type="binding site" evidence="1">
    <location>
        <position position="59"/>
    </location>
    <ligand>
        <name>Ca(2+)</name>
        <dbReference type="ChEBI" id="CHEBI:29108"/>
        <label>1</label>
    </ligand>
</feature>
<feature type="binding site" evidence="1 5">
    <location>
        <position position="62"/>
    </location>
    <ligand>
        <name>Ca(2+)</name>
        <dbReference type="ChEBI" id="CHEBI:29108"/>
        <label>1</label>
    </ligand>
</feature>
<feature type="binding site" evidence="1 5">
    <location>
        <position position="90"/>
    </location>
    <ligand>
        <name>Ca(2+)</name>
        <dbReference type="ChEBI" id="CHEBI:29108"/>
        <label>2</label>
    </ligand>
</feature>
<feature type="binding site" evidence="1 5">
    <location>
        <position position="92"/>
    </location>
    <ligand>
        <name>Ca(2+)</name>
        <dbReference type="ChEBI" id="CHEBI:29108"/>
        <label>2</label>
    </ligand>
</feature>
<feature type="binding site" evidence="1 5">
    <location>
        <position position="94"/>
    </location>
    <ligand>
        <name>Ca(2+)</name>
        <dbReference type="ChEBI" id="CHEBI:29108"/>
        <label>2</label>
    </ligand>
</feature>
<feature type="binding site" evidence="5">
    <location>
        <position position="96"/>
    </location>
    <ligand>
        <name>Ca(2+)</name>
        <dbReference type="ChEBI" id="CHEBI:29108"/>
        <label>2</label>
    </ligand>
</feature>
<feature type="binding site" evidence="1 5">
    <location>
        <position position="101"/>
    </location>
    <ligand>
        <name>Ca(2+)</name>
        <dbReference type="ChEBI" id="CHEBI:29108"/>
        <label>2</label>
    </ligand>
</feature>
<feature type="modified residue" description="N-acetylalanine" evidence="6">
    <location>
        <position position="1"/>
    </location>
</feature>
<feature type="unsure residue" description="I or L" evidence="6">
    <location>
        <position position="5"/>
    </location>
</feature>
<feature type="unsure residue" description="L or I" evidence="6">
    <location>
        <position position="6"/>
    </location>
</feature>
<feature type="unsure residue" description="I or L" evidence="6">
    <location>
        <position position="11"/>
    </location>
</feature>
<feature type="unsure residue" description="L or I" evidence="6">
    <location>
        <position position="15"/>
    </location>
</feature>
<feature type="unsure residue" description="K or Q" evidence="6">
    <location>
        <position position="19"/>
    </location>
</feature>
<feature type="unsure residue" description="K or Q" evidence="6">
    <location>
        <position position="25"/>
    </location>
</feature>
<feature type="unsure residue" description="K or Q" evidence="6">
    <location>
        <position position="32"/>
    </location>
</feature>
<feature type="unsure residue" description="I or L" evidence="6">
    <location>
        <position position="33"/>
    </location>
</feature>
<feature type="unsure residue" description="L or I" evidence="6">
    <location>
        <position position="35"/>
    </location>
</feature>
<feature type="unsure residue" description="K or Q" evidence="6">
    <location>
        <position position="36"/>
    </location>
</feature>
<feature type="unsure residue" description="K or Q" evidence="6">
    <location>
        <position position="38"/>
    </location>
</feature>
<feature type="unsure residue" description="I or L" evidence="6">
    <location>
        <position position="43"/>
    </location>
</feature>
<feature type="unsure residue" description="K or Q" evidence="6">
    <location>
        <position position="44"/>
    </location>
</feature>
<feature type="unsure residue" description="K or Q" evidence="6">
    <location>
        <position position="45"/>
    </location>
</feature>
<feature type="unsure residue" description="I or L" evidence="6">
    <location>
        <position position="49"/>
    </location>
</feature>
<feature type="unsure residue" description="I or L" evidence="6">
    <location>
        <position position="50"/>
    </location>
</feature>
<feature type="unsure residue" description="Q or K" evidence="6">
    <location>
        <position position="52"/>
    </location>
</feature>
<feature type="unsure residue" description="K or Q" evidence="6">
    <location>
        <position position="54"/>
    </location>
</feature>
<feature type="unsure residue" description="L or I" evidence="6">
    <location>
        <position position="63"/>
    </location>
</feature>
<feature type="unsure residue" description="K or Q" evidence="6">
    <location>
        <position position="64"/>
    </location>
</feature>
<feature type="unsure residue" description="L or I" evidence="6">
    <location>
        <position position="65"/>
    </location>
</feature>
<feature type="unsure residue" description="L or I" evidence="6">
    <location>
        <position position="67"/>
    </location>
</feature>
<feature type="unsure residue" description="Q or K" evidence="6">
    <location>
        <position position="68"/>
    </location>
</feature>
<feature type="unsure residue" description="L or I" evidence="6">
    <location>
        <position position="77"/>
    </location>
</feature>
<feature type="unsure residue" description="L or I" evidence="6">
    <location>
        <position position="86"/>
    </location>
</feature>
<feature type="unsure residue" description="K or Q" evidence="6">
    <location>
        <position position="87"/>
    </location>
</feature>
<feature type="unsure residue" description="K or Q" evidence="6">
    <location>
        <position position="96"/>
    </location>
</feature>
<feature type="unsure residue" description="I or L" evidence="6">
    <location>
        <position position="97"/>
    </location>
</feature>
<feature type="unsure residue" description="K or Q" evidence="6">
    <location>
        <position position="107"/>
    </location>
</feature>
<evidence type="ECO:0000250" key="1">
    <source>
        <dbReference type="UniProtKB" id="P02621"/>
    </source>
</evidence>
<evidence type="ECO:0000250" key="2">
    <source>
        <dbReference type="UniProtKB" id="P02622"/>
    </source>
</evidence>
<evidence type="ECO:0000250" key="3">
    <source>
        <dbReference type="UniProtKB" id="P02624"/>
    </source>
</evidence>
<evidence type="ECO:0000255" key="4"/>
<evidence type="ECO:0000255" key="5">
    <source>
        <dbReference type="PROSITE-ProRule" id="PRU00448"/>
    </source>
</evidence>
<evidence type="ECO:0000269" key="6">
    <source>
    </source>
</evidence>
<evidence type="ECO:0000303" key="7">
    <source>
    </source>
</evidence>
<evidence type="ECO:0000305" key="8"/>
<name>PRVB1_MERCP</name>
<comment type="function">
    <text evidence="2 3">In muscle, parvalbumin is thought to be involved in relaxation after contraction. It binds two calcium ions (By similarity).</text>
</comment>
<comment type="mass spectrometry"/>
<comment type="miscellaneous">
    <text evidence="2 6">Is regarded as an important allergen.</text>
</comment>
<comment type="miscellaneous">
    <text evidence="6">On the 2D-gel the determined pI of this protein is: 4.55, its MW is: 11.30 kDa.</text>
</comment>
<comment type="similarity">
    <text evidence="4">Belongs to the parvalbumin family.</text>
</comment>
<protein>
    <recommendedName>
        <fullName evidence="7">Parvalbumin beta 1</fullName>
    </recommendedName>
</protein>
<organism>
    <name type="scientific">Merluccius capensis</name>
    <name type="common">Shallow-water Cape hake</name>
    <name type="synonym">Gadus merluccius</name>
    <dbReference type="NCBI Taxonomy" id="89947"/>
    <lineage>
        <taxon>Eukaryota</taxon>
        <taxon>Metazoa</taxon>
        <taxon>Chordata</taxon>
        <taxon>Craniata</taxon>
        <taxon>Vertebrata</taxon>
        <taxon>Euteleostomi</taxon>
        <taxon>Actinopterygii</taxon>
        <taxon>Neopterygii</taxon>
        <taxon>Teleostei</taxon>
        <taxon>Neoteleostei</taxon>
        <taxon>Acanthomorphata</taxon>
        <taxon>Zeiogadaria</taxon>
        <taxon>Gadariae</taxon>
        <taxon>Gadiformes</taxon>
        <taxon>Gadoidei</taxon>
        <taxon>Merlucciidae</taxon>
        <taxon>Merluccius</taxon>
    </lineage>
</organism>
<reference evidence="8" key="1">
    <citation type="journal article" date="2010" name="J. Proteome Res.">
        <title>Extensive de novo sequencing of new parvalbumin isoforms using a novel combination of bottom-up proteomics, accurate molecular mass measurement by FTICR-MS, and selected MS/MS ion monitoring.</title>
        <authorList>
            <person name="Carrera M."/>
            <person name="Canas B."/>
            <person name="Vazquez J."/>
            <person name="Gallardo J.M."/>
        </authorList>
    </citation>
    <scope>PROTEIN SEQUENCE</scope>
    <scope>MASS SPECTROMETRY</scope>
    <scope>ACETYLATION AT ALA-1</scope>
    <source>
        <tissue evidence="6">Muscle</tissue>
    </source>
</reference>
<keyword id="KW-0007">Acetylation</keyword>
<keyword id="KW-0020">Allergen</keyword>
<keyword id="KW-0106">Calcium</keyword>
<keyword id="KW-0903">Direct protein sequencing</keyword>
<keyword id="KW-0479">Metal-binding</keyword>
<keyword id="KW-0514">Muscle protein</keyword>
<keyword id="KW-0677">Repeat</keyword>
<accession>P86756</accession>
<proteinExistence type="evidence at protein level"/>